<organism>
    <name type="scientific">Escherichia coli O8 (strain IAI1)</name>
    <dbReference type="NCBI Taxonomy" id="585034"/>
    <lineage>
        <taxon>Bacteria</taxon>
        <taxon>Pseudomonadati</taxon>
        <taxon>Pseudomonadota</taxon>
        <taxon>Gammaproteobacteria</taxon>
        <taxon>Enterobacterales</taxon>
        <taxon>Enterobacteriaceae</taxon>
        <taxon>Escherichia</taxon>
    </lineage>
</organism>
<accession>B7M1M3</accession>
<protein>
    <recommendedName>
        <fullName evidence="1">Large ribosomal subunit protein uL24</fullName>
    </recommendedName>
    <alternativeName>
        <fullName evidence="2">50S ribosomal protein L24</fullName>
    </alternativeName>
</protein>
<comment type="function">
    <text evidence="1">One of two assembly initiator proteins, it binds directly to the 5'-end of the 23S rRNA, where it nucleates assembly of the 50S subunit.</text>
</comment>
<comment type="function">
    <text evidence="1">One of the proteins that surrounds the polypeptide exit tunnel on the outside of the subunit.</text>
</comment>
<comment type="subunit">
    <text evidence="1">Part of the 50S ribosomal subunit.</text>
</comment>
<comment type="similarity">
    <text evidence="1">Belongs to the universal ribosomal protein uL24 family.</text>
</comment>
<name>RL24_ECO8A</name>
<keyword id="KW-0687">Ribonucleoprotein</keyword>
<keyword id="KW-0689">Ribosomal protein</keyword>
<keyword id="KW-0694">RNA-binding</keyword>
<keyword id="KW-0699">rRNA-binding</keyword>
<dbReference type="EMBL" id="CU928160">
    <property type="protein sequence ID" value="CAR00260.1"/>
    <property type="molecule type" value="Genomic_DNA"/>
</dbReference>
<dbReference type="RefSeq" id="WP_000729185.1">
    <property type="nucleotide sequence ID" value="NC_011741.1"/>
</dbReference>
<dbReference type="SMR" id="B7M1M3"/>
<dbReference type="GeneID" id="93778678"/>
<dbReference type="KEGG" id="ecr:ECIAI1_3458"/>
<dbReference type="HOGENOM" id="CLU_093315_2_2_6"/>
<dbReference type="GO" id="GO:0005829">
    <property type="term" value="C:cytosol"/>
    <property type="evidence" value="ECO:0007669"/>
    <property type="project" value="UniProtKB-ARBA"/>
</dbReference>
<dbReference type="GO" id="GO:1990904">
    <property type="term" value="C:ribonucleoprotein complex"/>
    <property type="evidence" value="ECO:0007669"/>
    <property type="project" value="UniProtKB-KW"/>
</dbReference>
<dbReference type="GO" id="GO:0005840">
    <property type="term" value="C:ribosome"/>
    <property type="evidence" value="ECO:0007669"/>
    <property type="project" value="UniProtKB-KW"/>
</dbReference>
<dbReference type="GO" id="GO:0019843">
    <property type="term" value="F:rRNA binding"/>
    <property type="evidence" value="ECO:0007669"/>
    <property type="project" value="UniProtKB-UniRule"/>
</dbReference>
<dbReference type="GO" id="GO:0003735">
    <property type="term" value="F:structural constituent of ribosome"/>
    <property type="evidence" value="ECO:0007669"/>
    <property type="project" value="InterPro"/>
</dbReference>
<dbReference type="GO" id="GO:0006412">
    <property type="term" value="P:translation"/>
    <property type="evidence" value="ECO:0007669"/>
    <property type="project" value="UniProtKB-UniRule"/>
</dbReference>
<dbReference type="CDD" id="cd06089">
    <property type="entry name" value="KOW_RPL26"/>
    <property type="match status" value="1"/>
</dbReference>
<dbReference type="FunFam" id="2.30.30.30:FF:000004">
    <property type="entry name" value="50S ribosomal protein L24"/>
    <property type="match status" value="1"/>
</dbReference>
<dbReference type="Gene3D" id="2.30.30.30">
    <property type="match status" value="1"/>
</dbReference>
<dbReference type="HAMAP" id="MF_01326_B">
    <property type="entry name" value="Ribosomal_uL24_B"/>
    <property type="match status" value="1"/>
</dbReference>
<dbReference type="InterPro" id="IPR005824">
    <property type="entry name" value="KOW"/>
</dbReference>
<dbReference type="InterPro" id="IPR014722">
    <property type="entry name" value="Rib_uL2_dom2"/>
</dbReference>
<dbReference type="InterPro" id="IPR003256">
    <property type="entry name" value="Ribosomal_uL24"/>
</dbReference>
<dbReference type="InterPro" id="IPR005825">
    <property type="entry name" value="Ribosomal_uL24_CS"/>
</dbReference>
<dbReference type="InterPro" id="IPR041988">
    <property type="entry name" value="Ribosomal_uL24_KOW"/>
</dbReference>
<dbReference type="InterPro" id="IPR008991">
    <property type="entry name" value="Translation_prot_SH3-like_sf"/>
</dbReference>
<dbReference type="NCBIfam" id="TIGR01079">
    <property type="entry name" value="rplX_bact"/>
    <property type="match status" value="1"/>
</dbReference>
<dbReference type="PANTHER" id="PTHR12903">
    <property type="entry name" value="MITOCHONDRIAL RIBOSOMAL PROTEIN L24"/>
    <property type="match status" value="1"/>
</dbReference>
<dbReference type="Pfam" id="PF00467">
    <property type="entry name" value="KOW"/>
    <property type="match status" value="1"/>
</dbReference>
<dbReference type="Pfam" id="PF17136">
    <property type="entry name" value="ribosomal_L24"/>
    <property type="match status" value="1"/>
</dbReference>
<dbReference type="SMART" id="SM00739">
    <property type="entry name" value="KOW"/>
    <property type="match status" value="1"/>
</dbReference>
<dbReference type="SUPFAM" id="SSF50104">
    <property type="entry name" value="Translation proteins SH3-like domain"/>
    <property type="match status" value="1"/>
</dbReference>
<dbReference type="PROSITE" id="PS01108">
    <property type="entry name" value="RIBOSOMAL_L24"/>
    <property type="match status" value="1"/>
</dbReference>
<reference key="1">
    <citation type="journal article" date="2009" name="PLoS Genet.">
        <title>Organised genome dynamics in the Escherichia coli species results in highly diverse adaptive paths.</title>
        <authorList>
            <person name="Touchon M."/>
            <person name="Hoede C."/>
            <person name="Tenaillon O."/>
            <person name="Barbe V."/>
            <person name="Baeriswyl S."/>
            <person name="Bidet P."/>
            <person name="Bingen E."/>
            <person name="Bonacorsi S."/>
            <person name="Bouchier C."/>
            <person name="Bouvet O."/>
            <person name="Calteau A."/>
            <person name="Chiapello H."/>
            <person name="Clermont O."/>
            <person name="Cruveiller S."/>
            <person name="Danchin A."/>
            <person name="Diard M."/>
            <person name="Dossat C."/>
            <person name="Karoui M.E."/>
            <person name="Frapy E."/>
            <person name="Garry L."/>
            <person name="Ghigo J.M."/>
            <person name="Gilles A.M."/>
            <person name="Johnson J."/>
            <person name="Le Bouguenec C."/>
            <person name="Lescat M."/>
            <person name="Mangenot S."/>
            <person name="Martinez-Jehanne V."/>
            <person name="Matic I."/>
            <person name="Nassif X."/>
            <person name="Oztas S."/>
            <person name="Petit M.A."/>
            <person name="Pichon C."/>
            <person name="Rouy Z."/>
            <person name="Ruf C.S."/>
            <person name="Schneider D."/>
            <person name="Tourret J."/>
            <person name="Vacherie B."/>
            <person name="Vallenet D."/>
            <person name="Medigue C."/>
            <person name="Rocha E.P.C."/>
            <person name="Denamur E."/>
        </authorList>
    </citation>
    <scope>NUCLEOTIDE SEQUENCE [LARGE SCALE GENOMIC DNA]</scope>
    <source>
        <strain>IAI1</strain>
    </source>
</reference>
<sequence>MAAKIRRDDEVIVLTGKDKGKRGKVKNVLSSGKVIVEGINLVKKHQKPVPALNQPGGIVEKEAAIQVSNVAIFNAATGKADRVGFRFEDGKKVRFFKSNSETIK</sequence>
<feature type="chain" id="PRO_1000141992" description="Large ribosomal subunit protein uL24">
    <location>
        <begin position="1"/>
        <end position="104"/>
    </location>
</feature>
<proteinExistence type="inferred from homology"/>
<evidence type="ECO:0000255" key="1">
    <source>
        <dbReference type="HAMAP-Rule" id="MF_01326"/>
    </source>
</evidence>
<evidence type="ECO:0000305" key="2"/>
<gene>
    <name evidence="1" type="primary">rplX</name>
    <name type="ordered locus">ECIAI1_3458</name>
</gene>